<accession>Q0T431</accession>
<keyword id="KW-0520">NAD</keyword>
<keyword id="KW-0560">Oxidoreductase</keyword>
<sequence>MQHKLLINGELVSGEGEKQPVYNPATGDVLLEIAEVSAEQVDAAVRAADAAFAEWGQTTPKARAECLLKLADVIEENGQVFAELESRNCGKPLHSAFNDEIPAIVDVFRFFAGAARCLNGLAAGEYLEGHTSMIRRDPLGVVASIAPWNYPLMMAAWKLAPALAAGNCVVLKPSEITPLTALKLAELAKDIFPAGVINILFGRGKTVGDPLTGHPKVRMVSLTGSIATGEHIISHTASSIKRTHMELGGKAPVIVFDDADIEAVVEGVRTFGYYNAGQDCTAACRIYAQKGIYDTLVEKLGAAVATLKSGAPDDESTELGPLSSLAHLERVSKAVEEAKATGHIKVITGGEKRKGNGYYYAPTLLAGALQDDAIVQKEVFGPVVSVTPFDNEEQVVNWANDSQYGLASSVWTKDVGRAHRVSARLQYGCTWVNTHFMLVSEMPHGGQKLSGYGKDMSLYGLEDYTVVRHVMVKH</sequence>
<feature type="chain" id="PRO_1000067396" description="Gamma-aminobutyraldehyde dehydrogenase">
    <location>
        <begin position="1"/>
        <end position="474"/>
    </location>
</feature>
<feature type="active site" evidence="1">
    <location>
        <position position="246"/>
    </location>
</feature>
<feature type="active site" description="Nucleophile" evidence="1">
    <location>
        <position position="280"/>
    </location>
</feature>
<feature type="binding site" evidence="1">
    <location>
        <begin position="146"/>
        <end position="148"/>
    </location>
    <ligand>
        <name>NAD(+)</name>
        <dbReference type="ChEBI" id="CHEBI:57540"/>
    </ligand>
</feature>
<feature type="binding site" evidence="1">
    <location>
        <begin position="172"/>
        <end position="175"/>
    </location>
    <ligand>
        <name>NAD(+)</name>
        <dbReference type="ChEBI" id="CHEBI:57540"/>
    </ligand>
</feature>
<feature type="binding site" evidence="1">
    <location>
        <position position="209"/>
    </location>
    <ligand>
        <name>NAD(+)</name>
        <dbReference type="ChEBI" id="CHEBI:57540"/>
    </ligand>
</feature>
<feature type="binding site" evidence="1">
    <location>
        <begin position="225"/>
        <end position="228"/>
    </location>
    <ligand>
        <name>NAD(+)</name>
        <dbReference type="ChEBI" id="CHEBI:57540"/>
    </ligand>
</feature>
<feature type="binding site" evidence="1">
    <location>
        <position position="280"/>
    </location>
    <ligand>
        <name>NAD(+)</name>
        <dbReference type="ChEBI" id="CHEBI:57540"/>
    </ligand>
</feature>
<organism>
    <name type="scientific">Shigella flexneri serotype 5b (strain 8401)</name>
    <dbReference type="NCBI Taxonomy" id="373384"/>
    <lineage>
        <taxon>Bacteria</taxon>
        <taxon>Pseudomonadati</taxon>
        <taxon>Pseudomonadota</taxon>
        <taxon>Gammaproteobacteria</taxon>
        <taxon>Enterobacterales</taxon>
        <taxon>Enterobacteriaceae</taxon>
        <taxon>Shigella</taxon>
    </lineage>
</organism>
<comment type="function">
    <text evidence="1">Catalyzes the oxidation 4-aminobutanal (gamma-aminobutyraldehyde) to 4-aminobutanoate (gamma-aminobutyrate or GABA). This is the second step in one of two pathways for putrescine degradation, where putrescine is converted into 4-aminobutanoate via 4-aminobutanal. Also functions as a 5-aminopentanal dehydrogenase in a a L-lysine degradation pathway to succinate that proceeds via cadaverine, glutarate and L-2-hydroxyglutarate.</text>
</comment>
<comment type="catalytic activity">
    <reaction evidence="1">
        <text>4-aminobutanal + NAD(+) + H2O = 4-aminobutanoate + NADH + 2 H(+)</text>
        <dbReference type="Rhea" id="RHEA:19105"/>
        <dbReference type="ChEBI" id="CHEBI:15377"/>
        <dbReference type="ChEBI" id="CHEBI:15378"/>
        <dbReference type="ChEBI" id="CHEBI:57540"/>
        <dbReference type="ChEBI" id="CHEBI:57945"/>
        <dbReference type="ChEBI" id="CHEBI:58264"/>
        <dbReference type="ChEBI" id="CHEBI:59888"/>
        <dbReference type="EC" id="1.2.1.19"/>
    </reaction>
    <physiologicalReaction direction="left-to-right" evidence="1">
        <dbReference type="Rhea" id="RHEA:19106"/>
    </physiologicalReaction>
</comment>
<comment type="catalytic activity">
    <reaction evidence="1">
        <text>5-aminopentanal + NAD(+) + H2O = 5-aminopentanoate + NADH + 2 H(+)</text>
        <dbReference type="Rhea" id="RHEA:61632"/>
        <dbReference type="ChEBI" id="CHEBI:15377"/>
        <dbReference type="ChEBI" id="CHEBI:15378"/>
        <dbReference type="ChEBI" id="CHEBI:57540"/>
        <dbReference type="ChEBI" id="CHEBI:57945"/>
        <dbReference type="ChEBI" id="CHEBI:144896"/>
        <dbReference type="ChEBI" id="CHEBI:356010"/>
    </reaction>
    <physiologicalReaction direction="left-to-right" evidence="1">
        <dbReference type="Rhea" id="RHEA:61633"/>
    </physiologicalReaction>
</comment>
<comment type="pathway">
    <text evidence="1">Amine and polyamine degradation; putrescine degradation; 4-aminobutanoate from 4-aminobutanal: step 1/1.</text>
</comment>
<comment type="pathway">
    <text evidence="1">Amino-acid degradation.</text>
</comment>
<comment type="subunit">
    <text evidence="1">Homotetramer.</text>
</comment>
<comment type="miscellaneous">
    <text evidence="1">4-aminobutanal can spontaneously cyclize to 1-pyrroline, and 5-aminopentanal to 1-piperideine.</text>
</comment>
<comment type="similarity">
    <text evidence="1">Belongs to the aldehyde dehydrogenase family. Gamma-aminobutyraldehyde dehydrogenase subfamily.</text>
</comment>
<name>ABDH_SHIF8</name>
<protein>
    <recommendedName>
        <fullName evidence="1">Gamma-aminobutyraldehyde dehydrogenase</fullName>
        <shortName evidence="1">ABALDH</shortName>
        <ecNumber evidence="1">1.2.1.19</ecNumber>
    </recommendedName>
    <alternativeName>
        <fullName evidence="1">1-pyrroline dehydrogenase</fullName>
    </alternativeName>
    <alternativeName>
        <fullName evidence="1">4-aminobutanal dehydrogenase</fullName>
    </alternativeName>
    <alternativeName>
        <fullName evidence="1">5-aminopentanal dehydrogenase</fullName>
        <ecNumber evidence="1">1.2.1.-</ecNumber>
    </alternativeName>
</protein>
<dbReference type="EC" id="1.2.1.19" evidence="1"/>
<dbReference type="EC" id="1.2.1.-" evidence="1"/>
<dbReference type="EMBL" id="CP000266">
    <property type="protein sequence ID" value="ABF03934.1"/>
    <property type="molecule type" value="Genomic_DNA"/>
</dbReference>
<dbReference type="RefSeq" id="WP_001163912.1">
    <property type="nucleotide sequence ID" value="NC_008258.1"/>
</dbReference>
<dbReference type="SMR" id="Q0T431"/>
<dbReference type="KEGG" id="sfv:SFV_1770"/>
<dbReference type="HOGENOM" id="CLU_005391_0_0_6"/>
<dbReference type="UniPathway" id="UPA00188">
    <property type="reaction ID" value="UER00292"/>
</dbReference>
<dbReference type="Proteomes" id="UP000000659">
    <property type="component" value="Chromosome"/>
</dbReference>
<dbReference type="GO" id="GO:0019145">
    <property type="term" value="F:aminobutyraldehyde dehydrogenase (NAD+) activity"/>
    <property type="evidence" value="ECO:0007669"/>
    <property type="project" value="UniProtKB-UniRule"/>
</dbReference>
<dbReference type="GO" id="GO:0051287">
    <property type="term" value="F:NAD binding"/>
    <property type="evidence" value="ECO:0007669"/>
    <property type="project" value="UniProtKB-UniRule"/>
</dbReference>
<dbReference type="GO" id="GO:0019477">
    <property type="term" value="P:L-lysine catabolic process"/>
    <property type="evidence" value="ECO:0007669"/>
    <property type="project" value="UniProtKB-UniRule"/>
</dbReference>
<dbReference type="GO" id="GO:0009447">
    <property type="term" value="P:putrescine catabolic process"/>
    <property type="evidence" value="ECO:0007669"/>
    <property type="project" value="UniProtKB-UniRule"/>
</dbReference>
<dbReference type="CDD" id="cd07092">
    <property type="entry name" value="ALDH_ABALDH-YdcW"/>
    <property type="match status" value="1"/>
</dbReference>
<dbReference type="FunFam" id="3.40.605.10:FF:000001">
    <property type="entry name" value="Aldehyde dehydrogenase 1"/>
    <property type="match status" value="1"/>
</dbReference>
<dbReference type="FunFam" id="3.40.309.10:FF:000010">
    <property type="entry name" value="Gamma-aminobutyraldehyde dehydrogenase"/>
    <property type="match status" value="1"/>
</dbReference>
<dbReference type="Gene3D" id="3.40.605.10">
    <property type="entry name" value="Aldehyde Dehydrogenase, Chain A, domain 1"/>
    <property type="match status" value="1"/>
</dbReference>
<dbReference type="Gene3D" id="3.40.309.10">
    <property type="entry name" value="Aldehyde Dehydrogenase, Chain A, domain 2"/>
    <property type="match status" value="1"/>
</dbReference>
<dbReference type="HAMAP" id="MF_01275">
    <property type="entry name" value="Aldedh_Prr"/>
    <property type="match status" value="1"/>
</dbReference>
<dbReference type="InterPro" id="IPR016161">
    <property type="entry name" value="Ald_DH/histidinol_DH"/>
</dbReference>
<dbReference type="InterPro" id="IPR016163">
    <property type="entry name" value="Ald_DH_C"/>
</dbReference>
<dbReference type="InterPro" id="IPR029510">
    <property type="entry name" value="Ald_DH_CS_GLU"/>
</dbReference>
<dbReference type="InterPro" id="IPR016162">
    <property type="entry name" value="Ald_DH_N"/>
</dbReference>
<dbReference type="InterPro" id="IPR015590">
    <property type="entry name" value="Aldehyde_DH_dom"/>
</dbReference>
<dbReference type="InterPro" id="IPR015657">
    <property type="entry name" value="Aminobutyraldehyde_DH"/>
</dbReference>
<dbReference type="InterPro" id="IPR017749">
    <property type="entry name" value="PatD"/>
</dbReference>
<dbReference type="NCBIfam" id="TIGR03374">
    <property type="entry name" value="ABALDH"/>
    <property type="match status" value="1"/>
</dbReference>
<dbReference type="NCBIfam" id="NF010000">
    <property type="entry name" value="PRK13473.1"/>
    <property type="match status" value="1"/>
</dbReference>
<dbReference type="PANTHER" id="PTHR11699">
    <property type="entry name" value="ALDEHYDE DEHYDROGENASE-RELATED"/>
    <property type="match status" value="1"/>
</dbReference>
<dbReference type="Pfam" id="PF00171">
    <property type="entry name" value="Aldedh"/>
    <property type="match status" value="1"/>
</dbReference>
<dbReference type="SUPFAM" id="SSF53720">
    <property type="entry name" value="ALDH-like"/>
    <property type="match status" value="1"/>
</dbReference>
<dbReference type="PROSITE" id="PS00687">
    <property type="entry name" value="ALDEHYDE_DEHYDR_GLU"/>
    <property type="match status" value="1"/>
</dbReference>
<evidence type="ECO:0000255" key="1">
    <source>
        <dbReference type="HAMAP-Rule" id="MF_01275"/>
    </source>
</evidence>
<reference key="1">
    <citation type="journal article" date="2006" name="BMC Genomics">
        <title>Complete genome sequence of Shigella flexneri 5b and comparison with Shigella flexneri 2a.</title>
        <authorList>
            <person name="Nie H."/>
            <person name="Yang F."/>
            <person name="Zhang X."/>
            <person name="Yang J."/>
            <person name="Chen L."/>
            <person name="Wang J."/>
            <person name="Xiong Z."/>
            <person name="Peng J."/>
            <person name="Sun L."/>
            <person name="Dong J."/>
            <person name="Xue Y."/>
            <person name="Xu X."/>
            <person name="Chen S."/>
            <person name="Yao Z."/>
            <person name="Shen Y."/>
            <person name="Jin Q."/>
        </authorList>
    </citation>
    <scope>NUCLEOTIDE SEQUENCE [LARGE SCALE GENOMIC DNA]</scope>
    <source>
        <strain>8401</strain>
    </source>
</reference>
<gene>
    <name evidence="1" type="primary">patD</name>
    <name type="ordered locus">SFV_1770</name>
</gene>
<proteinExistence type="inferred from homology"/>